<dbReference type="EMBL" id="CU633749">
    <property type="protein sequence ID" value="CAQ69108.1"/>
    <property type="molecule type" value="Genomic_DNA"/>
</dbReference>
<dbReference type="RefSeq" id="WP_012352436.1">
    <property type="nucleotide sequence ID" value="NC_010528.1"/>
</dbReference>
<dbReference type="SMR" id="B3R475"/>
<dbReference type="GeneID" id="29761991"/>
<dbReference type="KEGG" id="cti:RALTA_A1144"/>
<dbReference type="eggNOG" id="COG0443">
    <property type="taxonomic scope" value="Bacteria"/>
</dbReference>
<dbReference type="HOGENOM" id="CLU_005965_2_1_4"/>
<dbReference type="BioCyc" id="CTAI977880:RALTA_RS05460-MONOMER"/>
<dbReference type="Proteomes" id="UP000001692">
    <property type="component" value="Chromosome 1"/>
</dbReference>
<dbReference type="GO" id="GO:0005524">
    <property type="term" value="F:ATP binding"/>
    <property type="evidence" value="ECO:0007669"/>
    <property type="project" value="UniProtKB-KW"/>
</dbReference>
<dbReference type="GO" id="GO:0016887">
    <property type="term" value="F:ATP hydrolysis activity"/>
    <property type="evidence" value="ECO:0007669"/>
    <property type="project" value="UniProtKB-UniRule"/>
</dbReference>
<dbReference type="GO" id="GO:0140662">
    <property type="term" value="F:ATP-dependent protein folding chaperone"/>
    <property type="evidence" value="ECO:0007669"/>
    <property type="project" value="InterPro"/>
</dbReference>
<dbReference type="GO" id="GO:0051082">
    <property type="term" value="F:unfolded protein binding"/>
    <property type="evidence" value="ECO:0007669"/>
    <property type="project" value="InterPro"/>
</dbReference>
<dbReference type="GO" id="GO:0016226">
    <property type="term" value="P:iron-sulfur cluster assembly"/>
    <property type="evidence" value="ECO:0007669"/>
    <property type="project" value="InterPro"/>
</dbReference>
<dbReference type="CDD" id="cd10236">
    <property type="entry name" value="ASKHA_NBD_HSP70_HscA"/>
    <property type="match status" value="1"/>
</dbReference>
<dbReference type="FunFam" id="3.30.420.40:FF:000046">
    <property type="entry name" value="Chaperone protein HscA"/>
    <property type="match status" value="1"/>
</dbReference>
<dbReference type="FunFam" id="2.60.34.10:FF:000005">
    <property type="entry name" value="Chaperone protein HscA homolog"/>
    <property type="match status" value="1"/>
</dbReference>
<dbReference type="Gene3D" id="1.20.1270.10">
    <property type="match status" value="1"/>
</dbReference>
<dbReference type="Gene3D" id="3.30.420.40">
    <property type="match status" value="2"/>
</dbReference>
<dbReference type="Gene3D" id="3.90.640.10">
    <property type="entry name" value="Actin, Chain A, domain 4"/>
    <property type="match status" value="1"/>
</dbReference>
<dbReference type="Gene3D" id="2.60.34.10">
    <property type="entry name" value="Substrate Binding Domain Of DNAk, Chain A, domain 1"/>
    <property type="match status" value="1"/>
</dbReference>
<dbReference type="HAMAP" id="MF_00679">
    <property type="entry name" value="HscA"/>
    <property type="match status" value="1"/>
</dbReference>
<dbReference type="InterPro" id="IPR043129">
    <property type="entry name" value="ATPase_NBD"/>
</dbReference>
<dbReference type="InterPro" id="IPR018181">
    <property type="entry name" value="Heat_shock_70_CS"/>
</dbReference>
<dbReference type="InterPro" id="IPR042039">
    <property type="entry name" value="HscA_NBD"/>
</dbReference>
<dbReference type="InterPro" id="IPR029048">
    <property type="entry name" value="HSP70_C_sf"/>
</dbReference>
<dbReference type="InterPro" id="IPR029047">
    <property type="entry name" value="HSP70_peptide-bd_sf"/>
</dbReference>
<dbReference type="InterPro" id="IPR013126">
    <property type="entry name" value="Hsp_70_fam"/>
</dbReference>
<dbReference type="InterPro" id="IPR010236">
    <property type="entry name" value="ISC_FeS_clus_asmbl_HscA"/>
</dbReference>
<dbReference type="NCBIfam" id="TIGR01991">
    <property type="entry name" value="HscA"/>
    <property type="match status" value="1"/>
</dbReference>
<dbReference type="NCBIfam" id="NF003520">
    <property type="entry name" value="PRK05183.1"/>
    <property type="match status" value="1"/>
</dbReference>
<dbReference type="PANTHER" id="PTHR19375">
    <property type="entry name" value="HEAT SHOCK PROTEIN 70KDA"/>
    <property type="match status" value="1"/>
</dbReference>
<dbReference type="Pfam" id="PF00012">
    <property type="entry name" value="HSP70"/>
    <property type="match status" value="1"/>
</dbReference>
<dbReference type="PRINTS" id="PR00301">
    <property type="entry name" value="HEATSHOCK70"/>
</dbReference>
<dbReference type="SUPFAM" id="SSF53067">
    <property type="entry name" value="Actin-like ATPase domain"/>
    <property type="match status" value="2"/>
</dbReference>
<dbReference type="SUPFAM" id="SSF100934">
    <property type="entry name" value="Heat shock protein 70kD (HSP70), C-terminal subdomain"/>
    <property type="match status" value="1"/>
</dbReference>
<dbReference type="SUPFAM" id="SSF100920">
    <property type="entry name" value="Heat shock protein 70kD (HSP70), peptide-binding domain"/>
    <property type="match status" value="1"/>
</dbReference>
<dbReference type="PROSITE" id="PS00297">
    <property type="entry name" value="HSP70_1"/>
    <property type="match status" value="1"/>
</dbReference>
<dbReference type="PROSITE" id="PS00329">
    <property type="entry name" value="HSP70_2"/>
    <property type="match status" value="1"/>
</dbReference>
<dbReference type="PROSITE" id="PS01036">
    <property type="entry name" value="HSP70_3"/>
    <property type="match status" value="1"/>
</dbReference>
<gene>
    <name evidence="1" type="primary">hscA</name>
    <name type="ordered locus">RALTA_A1144</name>
</gene>
<proteinExistence type="inferred from homology"/>
<sequence length="621" mass="66648">MALLQISEPGMSPAPHQRRLAVGIDLGTTNSLVAAVRSSIPEVLADERGRALLPSVVRYLPDRTAQIGYRAQDEAVRDPKNTIVSVKRFMGRGLRDVANIEHSPYDFVDAPGMVQIKTAAGVKSPVEISAEILATLRQRAEDSLGDDLVGAVITVPAYFDEAQRQATKDAARLAGLEVLRLLNEPTAAAIAYGLDNAAEGIYAVYDLGGGTFDISVLKLTQGVFEVLATGGDSALGGDDFDQRLLCWIVEQANLQPLSAQDMRLLMVRARAAKEALSEADSTVIDAVLESGEIVHLTLTDEIFEQITAHLVQKTLAPVRKALRDAGVGPEEVKGVVLVGGATRMPSIRKAVGDFFGQNPLTNLDPDRVVALGAAMQANLLAGNHAPGEDWLLLDVIPLSLGVETMGGLVEKIIPRNSTIPVARAQEFTTFKDGQTAMAIHVLQGERELASDCRSLARFELRGIPPMVAGAARIRVTYQVDADGLLSVTARETHSGVEASVTVKPSYGLADDDIARMLQDSFREAEHDMKSRALAEERVEADRLVEATQRALETDGDLLSADERAAVEALMATVREIATGEDHLAIRAAVEKLSHGTDEFAARRMDRSIKSALAGRKVQELG</sequence>
<accession>B3R475</accession>
<reference key="1">
    <citation type="journal article" date="2008" name="Genome Res.">
        <title>Genome sequence of the beta-rhizobium Cupriavidus taiwanensis and comparative genomics of rhizobia.</title>
        <authorList>
            <person name="Amadou C."/>
            <person name="Pascal G."/>
            <person name="Mangenot S."/>
            <person name="Glew M."/>
            <person name="Bontemps C."/>
            <person name="Capela D."/>
            <person name="Carrere S."/>
            <person name="Cruveiller S."/>
            <person name="Dossat C."/>
            <person name="Lajus A."/>
            <person name="Marchetti M."/>
            <person name="Poinsot V."/>
            <person name="Rouy Z."/>
            <person name="Servin B."/>
            <person name="Saad M."/>
            <person name="Schenowitz C."/>
            <person name="Barbe V."/>
            <person name="Batut J."/>
            <person name="Medigue C."/>
            <person name="Masson-Boivin C."/>
        </authorList>
    </citation>
    <scope>NUCLEOTIDE SEQUENCE [LARGE SCALE GENOMIC DNA]</scope>
    <source>
        <strain>DSM 17343 / BCRC 17206 / CCUG 44338 / CIP 107171 / LMG 19424 / R1</strain>
    </source>
</reference>
<comment type="function">
    <text evidence="1">Chaperone involved in the maturation of iron-sulfur cluster-containing proteins. Has a low intrinsic ATPase activity which is markedly stimulated by HscB.</text>
</comment>
<comment type="similarity">
    <text evidence="1">Belongs to the heat shock protein 70 family.</text>
</comment>
<feature type="chain" id="PRO_1000131670" description="Chaperone protein HscA homolog">
    <location>
        <begin position="1"/>
        <end position="621"/>
    </location>
</feature>
<name>HSCA_CUPTR</name>
<keyword id="KW-0067">ATP-binding</keyword>
<keyword id="KW-0143">Chaperone</keyword>
<keyword id="KW-0547">Nucleotide-binding</keyword>
<organism>
    <name type="scientific">Cupriavidus taiwanensis (strain DSM 17343 / BCRC 17206 / CCUG 44338 / CIP 107171 / LMG 19424 / R1)</name>
    <name type="common">Ralstonia taiwanensis (strain LMG 19424)</name>
    <dbReference type="NCBI Taxonomy" id="977880"/>
    <lineage>
        <taxon>Bacteria</taxon>
        <taxon>Pseudomonadati</taxon>
        <taxon>Pseudomonadota</taxon>
        <taxon>Betaproteobacteria</taxon>
        <taxon>Burkholderiales</taxon>
        <taxon>Burkholderiaceae</taxon>
        <taxon>Cupriavidus</taxon>
    </lineage>
</organism>
<protein>
    <recommendedName>
        <fullName evidence="1">Chaperone protein HscA homolog</fullName>
    </recommendedName>
</protein>
<evidence type="ECO:0000255" key="1">
    <source>
        <dbReference type="HAMAP-Rule" id="MF_00679"/>
    </source>
</evidence>